<comment type="function">
    <text evidence="1">Required for nuclear migration.</text>
</comment>
<comment type="subunit">
    <text evidence="1">Self-associates. Interacts with PAC1 (By similarity).</text>
</comment>
<comment type="subcellular location">
    <subcellularLocation>
        <location>Cytoplasm</location>
        <location>Cytoskeleton</location>
    </subcellularLocation>
    <text evidence="1">Localizes to the plus ends of microtubules.</text>
</comment>
<comment type="similarity">
    <text evidence="4">Belongs to the nudE family.</text>
</comment>
<reference key="1">
    <citation type="journal article" date="2007" name="Science">
        <title>The Fusarium graminearum genome reveals a link between localized polymorphism and pathogen specialization.</title>
        <authorList>
            <person name="Cuomo C.A."/>
            <person name="Gueldener U."/>
            <person name="Xu J.-R."/>
            <person name="Trail F."/>
            <person name="Turgeon B.G."/>
            <person name="Di Pietro A."/>
            <person name="Walton J.D."/>
            <person name="Ma L.-J."/>
            <person name="Baker S.E."/>
            <person name="Rep M."/>
            <person name="Adam G."/>
            <person name="Antoniw J."/>
            <person name="Baldwin T."/>
            <person name="Calvo S.E."/>
            <person name="Chang Y.-L."/>
            <person name="DeCaprio D."/>
            <person name="Gale L.R."/>
            <person name="Gnerre S."/>
            <person name="Goswami R.S."/>
            <person name="Hammond-Kosack K."/>
            <person name="Harris L.J."/>
            <person name="Hilburn K."/>
            <person name="Kennell J.C."/>
            <person name="Kroken S."/>
            <person name="Magnuson J.K."/>
            <person name="Mannhaupt G."/>
            <person name="Mauceli E.W."/>
            <person name="Mewes H.-W."/>
            <person name="Mitterbauer R."/>
            <person name="Muehlbauer G."/>
            <person name="Muensterkoetter M."/>
            <person name="Nelson D."/>
            <person name="O'Donnell K."/>
            <person name="Ouellet T."/>
            <person name="Qi W."/>
            <person name="Quesneville H."/>
            <person name="Roncero M.I.G."/>
            <person name="Seong K.-Y."/>
            <person name="Tetko I.V."/>
            <person name="Urban M."/>
            <person name="Waalwijk C."/>
            <person name="Ward T.J."/>
            <person name="Yao J."/>
            <person name="Birren B.W."/>
            <person name="Kistler H.C."/>
        </authorList>
    </citation>
    <scope>NUCLEOTIDE SEQUENCE [LARGE SCALE GENOMIC DNA]</scope>
    <source>
        <strain>ATCC MYA-4620 / CBS 123657 / FGSC 9075 / NRRL 31084 / PH-1</strain>
    </source>
</reference>
<reference key="2">
    <citation type="journal article" date="2010" name="Nature">
        <title>Comparative genomics reveals mobile pathogenicity chromosomes in Fusarium.</title>
        <authorList>
            <person name="Ma L.-J."/>
            <person name="van der Does H.C."/>
            <person name="Borkovich K.A."/>
            <person name="Coleman J.J."/>
            <person name="Daboussi M.-J."/>
            <person name="Di Pietro A."/>
            <person name="Dufresne M."/>
            <person name="Freitag M."/>
            <person name="Grabherr M."/>
            <person name="Henrissat B."/>
            <person name="Houterman P.M."/>
            <person name="Kang S."/>
            <person name="Shim W.-B."/>
            <person name="Woloshuk C."/>
            <person name="Xie X."/>
            <person name="Xu J.-R."/>
            <person name="Antoniw J."/>
            <person name="Baker S.E."/>
            <person name="Bluhm B.H."/>
            <person name="Breakspear A."/>
            <person name="Brown D.W."/>
            <person name="Butchko R.A.E."/>
            <person name="Chapman S."/>
            <person name="Coulson R."/>
            <person name="Coutinho P.M."/>
            <person name="Danchin E.G.J."/>
            <person name="Diener A."/>
            <person name="Gale L.R."/>
            <person name="Gardiner D.M."/>
            <person name="Goff S."/>
            <person name="Hammond-Kosack K.E."/>
            <person name="Hilburn K."/>
            <person name="Hua-Van A."/>
            <person name="Jonkers W."/>
            <person name="Kazan K."/>
            <person name="Kodira C.D."/>
            <person name="Koehrsen M."/>
            <person name="Kumar L."/>
            <person name="Lee Y.-H."/>
            <person name="Li L."/>
            <person name="Manners J.M."/>
            <person name="Miranda-Saavedra D."/>
            <person name="Mukherjee M."/>
            <person name="Park G."/>
            <person name="Park J."/>
            <person name="Park S.-Y."/>
            <person name="Proctor R.H."/>
            <person name="Regev A."/>
            <person name="Ruiz-Roldan M.C."/>
            <person name="Sain D."/>
            <person name="Sakthikumar S."/>
            <person name="Sykes S."/>
            <person name="Schwartz D.C."/>
            <person name="Turgeon B.G."/>
            <person name="Wapinski I."/>
            <person name="Yoder O."/>
            <person name="Young S."/>
            <person name="Zeng Q."/>
            <person name="Zhou S."/>
            <person name="Galagan J."/>
            <person name="Cuomo C.A."/>
            <person name="Kistler H.C."/>
            <person name="Rep M."/>
        </authorList>
    </citation>
    <scope>GENOME REANNOTATION</scope>
    <source>
        <strain>ATCC MYA-4620 / CBS 123657 / FGSC 9075 / NRRL 31084 / PH-1</strain>
    </source>
</reference>
<reference key="3">
    <citation type="journal article" date="2015" name="BMC Genomics">
        <title>The completed genome sequence of the pathogenic ascomycete fungus Fusarium graminearum.</title>
        <authorList>
            <person name="King R."/>
            <person name="Urban M."/>
            <person name="Hammond-Kosack M.C.U."/>
            <person name="Hassani-Pak K."/>
            <person name="Hammond-Kosack K.E."/>
        </authorList>
    </citation>
    <scope>NUCLEOTIDE SEQUENCE [LARGE SCALE GENOMIC DNA]</scope>
    <source>
        <strain>ATCC MYA-4620 / CBS 123657 / FGSC 9075 / NRRL 31084 / PH-1</strain>
    </source>
</reference>
<organism>
    <name type="scientific">Gibberella zeae (strain ATCC MYA-4620 / CBS 123657 / FGSC 9075 / NRRL 31084 / PH-1)</name>
    <name type="common">Wheat head blight fungus</name>
    <name type="synonym">Fusarium graminearum</name>
    <dbReference type="NCBI Taxonomy" id="229533"/>
    <lineage>
        <taxon>Eukaryota</taxon>
        <taxon>Fungi</taxon>
        <taxon>Dikarya</taxon>
        <taxon>Ascomycota</taxon>
        <taxon>Pezizomycotina</taxon>
        <taxon>Sordariomycetes</taxon>
        <taxon>Hypocreomycetidae</taxon>
        <taxon>Hypocreales</taxon>
        <taxon>Nectriaceae</taxon>
        <taxon>Fusarium</taxon>
    </lineage>
</organism>
<proteinExistence type="inferred from homology"/>
<dbReference type="EMBL" id="DS231666">
    <property type="protein sequence ID" value="ESU12690.1"/>
    <property type="molecule type" value="Genomic_DNA"/>
</dbReference>
<dbReference type="EMBL" id="HG970335">
    <property type="protein sequence ID" value="CEF82931.1"/>
    <property type="molecule type" value="Genomic_DNA"/>
</dbReference>
<dbReference type="RefSeq" id="XP_011326197.1">
    <property type="nucleotide sequence ID" value="XM_011327895.1"/>
</dbReference>
<dbReference type="SMR" id="Q4I877"/>
<dbReference type="STRING" id="229533.Q4I877"/>
<dbReference type="GeneID" id="23553708"/>
<dbReference type="KEGG" id="fgr:FGSG_06581"/>
<dbReference type="VEuPathDB" id="FungiDB:FGRAMPH1_01G22637"/>
<dbReference type="eggNOG" id="KOG1853">
    <property type="taxonomic scope" value="Eukaryota"/>
</dbReference>
<dbReference type="HOGENOM" id="CLU_034391_0_0_1"/>
<dbReference type="InParanoid" id="Q4I877"/>
<dbReference type="OrthoDB" id="113334at110618"/>
<dbReference type="Proteomes" id="UP000070720">
    <property type="component" value="Chromosome 4"/>
</dbReference>
<dbReference type="GO" id="GO:0005737">
    <property type="term" value="C:cytoplasm"/>
    <property type="evidence" value="ECO:0007669"/>
    <property type="project" value="UniProtKB-KW"/>
</dbReference>
<dbReference type="GO" id="GO:0005871">
    <property type="term" value="C:kinesin complex"/>
    <property type="evidence" value="ECO:0007669"/>
    <property type="project" value="TreeGrafter"/>
</dbReference>
<dbReference type="GO" id="GO:0000776">
    <property type="term" value="C:kinetochore"/>
    <property type="evidence" value="ECO:0007669"/>
    <property type="project" value="TreeGrafter"/>
</dbReference>
<dbReference type="GO" id="GO:0005874">
    <property type="term" value="C:microtubule"/>
    <property type="evidence" value="ECO:0007669"/>
    <property type="project" value="UniProtKB-KW"/>
</dbReference>
<dbReference type="GO" id="GO:0008017">
    <property type="term" value="F:microtubule binding"/>
    <property type="evidence" value="ECO:0007669"/>
    <property type="project" value="InterPro"/>
</dbReference>
<dbReference type="GO" id="GO:0051642">
    <property type="term" value="P:centrosome localization"/>
    <property type="evidence" value="ECO:0007669"/>
    <property type="project" value="TreeGrafter"/>
</dbReference>
<dbReference type="GO" id="GO:0007059">
    <property type="term" value="P:chromosome segregation"/>
    <property type="evidence" value="ECO:0007669"/>
    <property type="project" value="TreeGrafter"/>
</dbReference>
<dbReference type="GO" id="GO:0051303">
    <property type="term" value="P:establishment of chromosome localization"/>
    <property type="evidence" value="ECO:0007669"/>
    <property type="project" value="TreeGrafter"/>
</dbReference>
<dbReference type="GO" id="GO:0000132">
    <property type="term" value="P:establishment of mitotic spindle orientation"/>
    <property type="evidence" value="ECO:0007669"/>
    <property type="project" value="TreeGrafter"/>
</dbReference>
<dbReference type="GO" id="GO:0007020">
    <property type="term" value="P:microtubule nucleation"/>
    <property type="evidence" value="ECO:0007669"/>
    <property type="project" value="TreeGrafter"/>
</dbReference>
<dbReference type="GO" id="GO:0047496">
    <property type="term" value="P:vesicle transport along microtubule"/>
    <property type="evidence" value="ECO:0007669"/>
    <property type="project" value="TreeGrafter"/>
</dbReference>
<dbReference type="Gene3D" id="6.10.250.1080">
    <property type="match status" value="1"/>
</dbReference>
<dbReference type="InterPro" id="IPR033494">
    <property type="entry name" value="NUDE"/>
</dbReference>
<dbReference type="InterPro" id="IPR006964">
    <property type="entry name" value="NUDE_dom"/>
</dbReference>
<dbReference type="PANTHER" id="PTHR10921:SF1">
    <property type="entry name" value="NUCLEAR DISTRIBUTION PROTEIN NUDE HOMOLOG"/>
    <property type="match status" value="1"/>
</dbReference>
<dbReference type="PANTHER" id="PTHR10921">
    <property type="entry name" value="NUCLEAR DISTRIBUTION PROTEIN NUDE HOMOLOG 1"/>
    <property type="match status" value="1"/>
</dbReference>
<dbReference type="Pfam" id="PF04880">
    <property type="entry name" value="NUDE_C"/>
    <property type="match status" value="1"/>
</dbReference>
<feature type="chain" id="PRO_0000240225" description="Nuclear distribution protein nudE homolog 1">
    <location>
        <begin position="1"/>
        <end position="583"/>
    </location>
</feature>
<feature type="region of interest" description="Disordered" evidence="3">
    <location>
        <begin position="34"/>
        <end position="68"/>
    </location>
</feature>
<feature type="region of interest" description="Disordered" evidence="3">
    <location>
        <begin position="211"/>
        <end position="339"/>
    </location>
</feature>
<feature type="region of interest" description="Disordered" evidence="3">
    <location>
        <begin position="358"/>
        <end position="583"/>
    </location>
</feature>
<feature type="coiled-coil region" evidence="2">
    <location>
        <begin position="14"/>
        <end position="195"/>
    </location>
</feature>
<feature type="compositionally biased region" description="Basic and acidic residues" evidence="3">
    <location>
        <begin position="35"/>
        <end position="67"/>
    </location>
</feature>
<feature type="compositionally biased region" description="Polar residues" evidence="3">
    <location>
        <begin position="219"/>
        <end position="235"/>
    </location>
</feature>
<feature type="compositionally biased region" description="Polar residues" evidence="3">
    <location>
        <begin position="279"/>
        <end position="319"/>
    </location>
</feature>
<feature type="compositionally biased region" description="Polar residues" evidence="3">
    <location>
        <begin position="329"/>
        <end position="339"/>
    </location>
</feature>
<feature type="compositionally biased region" description="Polar residues" evidence="3">
    <location>
        <begin position="379"/>
        <end position="392"/>
    </location>
</feature>
<feature type="compositionally biased region" description="Polar residues" evidence="3">
    <location>
        <begin position="399"/>
        <end position="422"/>
    </location>
</feature>
<feature type="compositionally biased region" description="Low complexity" evidence="3">
    <location>
        <begin position="453"/>
        <end position="469"/>
    </location>
</feature>
<feature type="compositionally biased region" description="Polar residues" evidence="3">
    <location>
        <begin position="529"/>
        <end position="538"/>
    </location>
</feature>
<evidence type="ECO:0000250" key="1"/>
<evidence type="ECO:0000255" key="2"/>
<evidence type="ECO:0000256" key="3">
    <source>
        <dbReference type="SAM" id="MobiDB-lite"/>
    </source>
</evidence>
<evidence type="ECO:0000305" key="4"/>
<sequence>MASEPPSSPPGAGATLEDTLGWYKSQYEQLESELAEFRDSSRELEQELEKDIERAEKQERHHQEKAETLGFEVEEWKRKYRESKTEASASQNALEKEITTLRDTNRTLQLKLRDIEVANDDFERQARNTTSSLEDMESKYNQAIERAVMMEEEIKIGEQEREQLRIESQRLREELGDLKIEAELLQDKFKKQESRHLSTISTDLSVLASPTFDGHPASPGSTASSPLITTPTDSKSMTEDGDTLSELPDPPSPPMSDVSAPLPKVAASRPSAHRRTVSRSRLPSTDISTTPLPRSKPPTATTRAPGSRISTGGTTTMRTPAQRAVGPRSASNKLPTSNSLTHIRTLTAQMQRLEARVHSVRSKLPGPTRTPPRASPRTNVYSATNMPASITIRSRKRTSGSAASSVTGDDPTPTNIPTSTPKGSHVPRLSTSGVSRLSFGPLPNRGGPDEISRPSSRASTSYATSYARPPSRAAGEGIPRPISRASLTGVRTPMGRSRSSMGFHGHSASISSHLDLEEQDEGEFRTPSRRGTYSSQGGEVSGSGIPMPATRRRSGSRRISASTMRSSVSGPPRKQLSDLGETY</sequence>
<accession>Q4I877</accession>
<accession>A0A0E0S918</accession>
<accession>V6RL98</accession>
<name>NDE1_GIBZE</name>
<protein>
    <recommendedName>
        <fullName>Nuclear distribution protein nudE homolog 1</fullName>
    </recommendedName>
</protein>
<keyword id="KW-0175">Coiled coil</keyword>
<keyword id="KW-0963">Cytoplasm</keyword>
<keyword id="KW-0206">Cytoskeleton</keyword>
<keyword id="KW-0493">Microtubule</keyword>
<keyword id="KW-1185">Reference proteome</keyword>
<keyword id="KW-0813">Transport</keyword>
<gene>
    <name type="primary">NDE1</name>
    <name type="ORF">FGRRES_06581</name>
    <name type="ORF">FGSG_06581</name>
</gene>